<sequence length="521" mass="58300">MSIQLHDKVSLLILDFGSQYTQLIARRLREYGIYCEIVPYHEKLEAIKAREPKGIILSGGPASVYEEDAFLIDKAVFELGIPVLGICYGMQLMTHYFGGVVAKAEHHEYGKAEVIFDALEGSESKLFEGCHSGKVVWMSHGDKVEKLPEGFTRIAHSTNSPFAAIAHQEKPFYAVQFHPEVVHSEEGALYLKNFALGICGCENDWNMHNFAEEQIKKIQERVKSGKVLCAVSGGVDSSVVAALLYRAIGEKLIPVFVDHGLLRAGEREAVEKMFKENLHVPLITVDASEIFLGKLKGVSDPETKRKIIGETFIEVFDVEAKKHDGIQYLAQGTLYPDVIESVSVKGPSKTIKSHHNVGGLPDWMTFELIEPLRELFKDEVRALGAELGMPREMLMRHPFPGPGLAIRIMGEVNFEDLELLRKADVIMLDELKKSGFYDKTWQAFTVLLNVRSVGVMGDNRTYDNTVCVRVVEAIDGMTATFAHLPHELLERMSTRIINEVDGINRVVYDISSKPPATIEWE</sequence>
<comment type="function">
    <text evidence="1">Catalyzes the synthesis of GMP from XMP.</text>
</comment>
<comment type="catalytic activity">
    <reaction evidence="1">
        <text>XMP + L-glutamine + ATP + H2O = GMP + L-glutamate + AMP + diphosphate + 2 H(+)</text>
        <dbReference type="Rhea" id="RHEA:11680"/>
        <dbReference type="ChEBI" id="CHEBI:15377"/>
        <dbReference type="ChEBI" id="CHEBI:15378"/>
        <dbReference type="ChEBI" id="CHEBI:29985"/>
        <dbReference type="ChEBI" id="CHEBI:30616"/>
        <dbReference type="ChEBI" id="CHEBI:33019"/>
        <dbReference type="ChEBI" id="CHEBI:57464"/>
        <dbReference type="ChEBI" id="CHEBI:58115"/>
        <dbReference type="ChEBI" id="CHEBI:58359"/>
        <dbReference type="ChEBI" id="CHEBI:456215"/>
        <dbReference type="EC" id="6.3.5.2"/>
    </reaction>
</comment>
<comment type="pathway">
    <text evidence="1">Purine metabolism; GMP biosynthesis; GMP from XMP (L-Gln route): step 1/1.</text>
</comment>
<comment type="subunit">
    <text evidence="1">Homodimer.</text>
</comment>
<dbReference type="EC" id="6.3.5.2" evidence="1"/>
<dbReference type="EMBL" id="BX571661">
    <property type="protein sequence ID" value="CAE10639.1"/>
    <property type="molecule type" value="Genomic_DNA"/>
</dbReference>
<dbReference type="RefSeq" id="WP_011139423.1">
    <property type="nucleotide sequence ID" value="NC_005090.1"/>
</dbReference>
<dbReference type="SMR" id="Q7M8K2"/>
<dbReference type="STRING" id="273121.WS1603"/>
<dbReference type="MEROPS" id="C26.957"/>
<dbReference type="KEGG" id="wsu:WS1603"/>
<dbReference type="eggNOG" id="COG0518">
    <property type="taxonomic scope" value="Bacteria"/>
</dbReference>
<dbReference type="eggNOG" id="COG0519">
    <property type="taxonomic scope" value="Bacteria"/>
</dbReference>
<dbReference type="HOGENOM" id="CLU_014340_0_5_7"/>
<dbReference type="UniPathway" id="UPA00189">
    <property type="reaction ID" value="UER00296"/>
</dbReference>
<dbReference type="Proteomes" id="UP000000422">
    <property type="component" value="Chromosome"/>
</dbReference>
<dbReference type="GO" id="GO:0005829">
    <property type="term" value="C:cytosol"/>
    <property type="evidence" value="ECO:0007669"/>
    <property type="project" value="TreeGrafter"/>
</dbReference>
<dbReference type="GO" id="GO:0005524">
    <property type="term" value="F:ATP binding"/>
    <property type="evidence" value="ECO:0007669"/>
    <property type="project" value="UniProtKB-UniRule"/>
</dbReference>
<dbReference type="GO" id="GO:0003921">
    <property type="term" value="F:GMP synthase activity"/>
    <property type="evidence" value="ECO:0007669"/>
    <property type="project" value="InterPro"/>
</dbReference>
<dbReference type="CDD" id="cd01742">
    <property type="entry name" value="GATase1_GMP_Synthase"/>
    <property type="match status" value="1"/>
</dbReference>
<dbReference type="CDD" id="cd01997">
    <property type="entry name" value="GMP_synthase_C"/>
    <property type="match status" value="1"/>
</dbReference>
<dbReference type="FunFam" id="3.30.300.10:FF:000002">
    <property type="entry name" value="GMP synthase [glutamine-hydrolyzing]"/>
    <property type="match status" value="1"/>
</dbReference>
<dbReference type="FunFam" id="3.40.50.620:FF:000001">
    <property type="entry name" value="GMP synthase [glutamine-hydrolyzing]"/>
    <property type="match status" value="1"/>
</dbReference>
<dbReference type="FunFam" id="3.40.50.880:FF:000001">
    <property type="entry name" value="GMP synthase [glutamine-hydrolyzing]"/>
    <property type="match status" value="1"/>
</dbReference>
<dbReference type="Gene3D" id="3.30.300.10">
    <property type="match status" value="1"/>
</dbReference>
<dbReference type="Gene3D" id="3.40.50.880">
    <property type="match status" value="1"/>
</dbReference>
<dbReference type="Gene3D" id="3.40.50.620">
    <property type="entry name" value="HUPs"/>
    <property type="match status" value="1"/>
</dbReference>
<dbReference type="HAMAP" id="MF_00344">
    <property type="entry name" value="GMP_synthase"/>
    <property type="match status" value="1"/>
</dbReference>
<dbReference type="InterPro" id="IPR029062">
    <property type="entry name" value="Class_I_gatase-like"/>
</dbReference>
<dbReference type="InterPro" id="IPR017926">
    <property type="entry name" value="GATASE"/>
</dbReference>
<dbReference type="InterPro" id="IPR001674">
    <property type="entry name" value="GMP_synth_C"/>
</dbReference>
<dbReference type="InterPro" id="IPR004739">
    <property type="entry name" value="GMP_synth_GATase"/>
</dbReference>
<dbReference type="InterPro" id="IPR022955">
    <property type="entry name" value="GMP_synthase"/>
</dbReference>
<dbReference type="InterPro" id="IPR025777">
    <property type="entry name" value="GMPS_ATP_PPase_dom"/>
</dbReference>
<dbReference type="InterPro" id="IPR014729">
    <property type="entry name" value="Rossmann-like_a/b/a_fold"/>
</dbReference>
<dbReference type="NCBIfam" id="TIGR00884">
    <property type="entry name" value="guaA_Cterm"/>
    <property type="match status" value="1"/>
</dbReference>
<dbReference type="NCBIfam" id="TIGR00888">
    <property type="entry name" value="guaA_Nterm"/>
    <property type="match status" value="1"/>
</dbReference>
<dbReference type="NCBIfam" id="NF000848">
    <property type="entry name" value="PRK00074.1"/>
    <property type="match status" value="1"/>
</dbReference>
<dbReference type="PANTHER" id="PTHR11922:SF2">
    <property type="entry name" value="GMP SYNTHASE [GLUTAMINE-HYDROLYZING]"/>
    <property type="match status" value="1"/>
</dbReference>
<dbReference type="PANTHER" id="PTHR11922">
    <property type="entry name" value="GMP SYNTHASE-RELATED"/>
    <property type="match status" value="1"/>
</dbReference>
<dbReference type="Pfam" id="PF00117">
    <property type="entry name" value="GATase"/>
    <property type="match status" value="1"/>
</dbReference>
<dbReference type="Pfam" id="PF00958">
    <property type="entry name" value="GMP_synt_C"/>
    <property type="match status" value="1"/>
</dbReference>
<dbReference type="PRINTS" id="PR00097">
    <property type="entry name" value="ANTSNTHASEII"/>
</dbReference>
<dbReference type="PRINTS" id="PR00096">
    <property type="entry name" value="GATASE"/>
</dbReference>
<dbReference type="SUPFAM" id="SSF52402">
    <property type="entry name" value="Adenine nucleotide alpha hydrolases-like"/>
    <property type="match status" value="1"/>
</dbReference>
<dbReference type="SUPFAM" id="SSF52317">
    <property type="entry name" value="Class I glutamine amidotransferase-like"/>
    <property type="match status" value="1"/>
</dbReference>
<dbReference type="SUPFAM" id="SSF54810">
    <property type="entry name" value="GMP synthetase C-terminal dimerisation domain"/>
    <property type="match status" value="1"/>
</dbReference>
<dbReference type="PROSITE" id="PS51273">
    <property type="entry name" value="GATASE_TYPE_1"/>
    <property type="match status" value="1"/>
</dbReference>
<dbReference type="PROSITE" id="PS51553">
    <property type="entry name" value="GMPS_ATP_PPASE"/>
    <property type="match status" value="1"/>
</dbReference>
<proteinExistence type="inferred from homology"/>
<reference key="1">
    <citation type="journal article" date="2003" name="Proc. Natl. Acad. Sci. U.S.A.">
        <title>Complete genome sequence and analysis of Wolinella succinogenes.</title>
        <authorList>
            <person name="Baar C."/>
            <person name="Eppinger M."/>
            <person name="Raddatz G."/>
            <person name="Simon J."/>
            <person name="Lanz C."/>
            <person name="Klimmek O."/>
            <person name="Nandakumar R."/>
            <person name="Gross R."/>
            <person name="Rosinus A."/>
            <person name="Keller H."/>
            <person name="Jagtap P."/>
            <person name="Linke B."/>
            <person name="Meyer F."/>
            <person name="Lederer H."/>
            <person name="Schuster S.C."/>
        </authorList>
    </citation>
    <scope>NUCLEOTIDE SEQUENCE [LARGE SCALE GENOMIC DNA]</scope>
    <source>
        <strain>ATCC 29543 / DSM 1740 / CCUG 13145 / JCM 31913 / LMG 7466 / NCTC 11488 / FDC 602W</strain>
    </source>
</reference>
<accession>Q7M8K2</accession>
<evidence type="ECO:0000255" key="1">
    <source>
        <dbReference type="HAMAP-Rule" id="MF_00344"/>
    </source>
</evidence>
<protein>
    <recommendedName>
        <fullName evidence="1">GMP synthase [glutamine-hydrolyzing]</fullName>
        <ecNumber evidence="1">6.3.5.2</ecNumber>
    </recommendedName>
    <alternativeName>
        <fullName evidence="1">GMP synthetase</fullName>
    </alternativeName>
    <alternativeName>
        <fullName evidence="1">Glutamine amidotransferase</fullName>
    </alternativeName>
</protein>
<gene>
    <name evidence="1" type="primary">guaA</name>
    <name type="ordered locus">WS1603</name>
</gene>
<organism>
    <name type="scientific">Wolinella succinogenes (strain ATCC 29543 / DSM 1740 / CCUG 13145 / JCM 31913 / LMG 7466 / NCTC 11488 / FDC 602W)</name>
    <name type="common">Vibrio succinogenes</name>
    <dbReference type="NCBI Taxonomy" id="273121"/>
    <lineage>
        <taxon>Bacteria</taxon>
        <taxon>Pseudomonadati</taxon>
        <taxon>Campylobacterota</taxon>
        <taxon>Epsilonproteobacteria</taxon>
        <taxon>Campylobacterales</taxon>
        <taxon>Helicobacteraceae</taxon>
        <taxon>Wolinella</taxon>
    </lineage>
</organism>
<feature type="chain" id="PRO_0000140209" description="GMP synthase [glutamine-hydrolyzing]">
    <location>
        <begin position="1"/>
        <end position="521"/>
    </location>
</feature>
<feature type="domain" description="Glutamine amidotransferase type-1" evidence="1">
    <location>
        <begin position="10"/>
        <end position="204"/>
    </location>
</feature>
<feature type="domain" description="GMPS ATP-PPase" evidence="1">
    <location>
        <begin position="205"/>
        <end position="396"/>
    </location>
</feature>
<feature type="active site" description="Nucleophile" evidence="1">
    <location>
        <position position="87"/>
    </location>
</feature>
<feature type="active site" evidence="1">
    <location>
        <position position="178"/>
    </location>
</feature>
<feature type="active site" evidence="1">
    <location>
        <position position="180"/>
    </location>
</feature>
<feature type="binding site" evidence="1">
    <location>
        <begin position="232"/>
        <end position="238"/>
    </location>
    <ligand>
        <name>ATP</name>
        <dbReference type="ChEBI" id="CHEBI:30616"/>
    </ligand>
</feature>
<keyword id="KW-0067">ATP-binding</keyword>
<keyword id="KW-0315">Glutamine amidotransferase</keyword>
<keyword id="KW-0332">GMP biosynthesis</keyword>
<keyword id="KW-0436">Ligase</keyword>
<keyword id="KW-0547">Nucleotide-binding</keyword>
<keyword id="KW-0658">Purine biosynthesis</keyword>
<keyword id="KW-1185">Reference proteome</keyword>
<name>GUAA_WOLSU</name>